<dbReference type="EC" id="3.4.21.91"/>
<dbReference type="EC" id="3.6.1.15"/>
<dbReference type="EC" id="3.6.4.13"/>
<dbReference type="EC" id="2.1.1.56" evidence="16"/>
<dbReference type="EC" id="2.1.1.57" evidence="16"/>
<dbReference type="EC" id="2.7.7.48" evidence="11"/>
<dbReference type="EMBL" id="JF895923">
    <property type="protein sequence ID" value="AEJ87340.1"/>
    <property type="molecule type" value="Genomic_RNA"/>
</dbReference>
<dbReference type="EMBL" id="KF192951">
    <property type="protein sequence ID" value="AGU68254.1"/>
    <property type="molecule type" value="Genomic_RNA"/>
</dbReference>
<dbReference type="RefSeq" id="YP_004734464.1">
    <property type="nucleotide sequence ID" value="NC_015843.2"/>
</dbReference>
<dbReference type="SMR" id="G1CRV4"/>
<dbReference type="GeneID" id="10971339"/>
<dbReference type="KEGG" id="vg:10971339"/>
<dbReference type="Proteomes" id="UP000130099">
    <property type="component" value="Genome"/>
</dbReference>
<dbReference type="Proteomes" id="UP000138163">
    <property type="component" value="Genome"/>
</dbReference>
<dbReference type="GO" id="GO:0005576">
    <property type="term" value="C:extracellular region"/>
    <property type="evidence" value="ECO:0007669"/>
    <property type="project" value="UniProtKB-SubCell"/>
</dbReference>
<dbReference type="GO" id="GO:0044167">
    <property type="term" value="C:host cell endoplasmic reticulum membrane"/>
    <property type="evidence" value="ECO:0007669"/>
    <property type="project" value="UniProtKB-SubCell"/>
</dbReference>
<dbReference type="GO" id="GO:0042025">
    <property type="term" value="C:host cell nucleus"/>
    <property type="evidence" value="ECO:0007669"/>
    <property type="project" value="UniProtKB-SubCell"/>
</dbReference>
<dbReference type="GO" id="GO:0044220">
    <property type="term" value="C:host cell perinuclear region of cytoplasm"/>
    <property type="evidence" value="ECO:0007669"/>
    <property type="project" value="UniProtKB-SubCell"/>
</dbReference>
<dbReference type="GO" id="GO:0016020">
    <property type="term" value="C:membrane"/>
    <property type="evidence" value="ECO:0007669"/>
    <property type="project" value="UniProtKB-KW"/>
</dbReference>
<dbReference type="GO" id="GO:0019028">
    <property type="term" value="C:viral capsid"/>
    <property type="evidence" value="ECO:0007669"/>
    <property type="project" value="UniProtKB-KW"/>
</dbReference>
<dbReference type="GO" id="GO:0019031">
    <property type="term" value="C:viral envelope"/>
    <property type="evidence" value="ECO:0007669"/>
    <property type="project" value="UniProtKB-KW"/>
</dbReference>
<dbReference type="GO" id="GO:0055036">
    <property type="term" value="C:virion membrane"/>
    <property type="evidence" value="ECO:0007669"/>
    <property type="project" value="UniProtKB-SubCell"/>
</dbReference>
<dbReference type="GO" id="GO:0005524">
    <property type="term" value="F:ATP binding"/>
    <property type="evidence" value="ECO:0007669"/>
    <property type="project" value="UniProtKB-KW"/>
</dbReference>
<dbReference type="GO" id="GO:0003725">
    <property type="term" value="F:double-stranded RNA binding"/>
    <property type="evidence" value="ECO:0007669"/>
    <property type="project" value="InterPro"/>
</dbReference>
<dbReference type="GO" id="GO:0046872">
    <property type="term" value="F:metal ion binding"/>
    <property type="evidence" value="ECO:0007669"/>
    <property type="project" value="UniProtKB-KW"/>
</dbReference>
<dbReference type="GO" id="GO:0004483">
    <property type="term" value="F:mRNA (nucleoside-2'-O-)-methyltransferase activity"/>
    <property type="evidence" value="ECO:0007669"/>
    <property type="project" value="InterPro"/>
</dbReference>
<dbReference type="GO" id="GO:0004482">
    <property type="term" value="F:mRNA 5'-cap (guanine-N7-)-methyltransferase activity"/>
    <property type="evidence" value="ECO:0007669"/>
    <property type="project" value="InterPro"/>
</dbReference>
<dbReference type="GO" id="GO:0046983">
    <property type="term" value="F:protein dimerization activity"/>
    <property type="evidence" value="ECO:0007669"/>
    <property type="project" value="InterPro"/>
</dbReference>
<dbReference type="GO" id="GO:0017111">
    <property type="term" value="F:ribonucleoside triphosphate phosphatase activity"/>
    <property type="evidence" value="ECO:0007669"/>
    <property type="project" value="UniProtKB-EC"/>
</dbReference>
<dbReference type="GO" id="GO:0003724">
    <property type="term" value="F:RNA helicase activity"/>
    <property type="evidence" value="ECO:0007669"/>
    <property type="project" value="UniProtKB-EC"/>
</dbReference>
<dbReference type="GO" id="GO:0003968">
    <property type="term" value="F:RNA-directed RNA polymerase activity"/>
    <property type="evidence" value="ECO:0007669"/>
    <property type="project" value="UniProtKB-KW"/>
</dbReference>
<dbReference type="GO" id="GO:0004252">
    <property type="term" value="F:serine-type endopeptidase activity"/>
    <property type="evidence" value="ECO:0007669"/>
    <property type="project" value="InterPro"/>
</dbReference>
<dbReference type="GO" id="GO:0005198">
    <property type="term" value="F:structural molecule activity"/>
    <property type="evidence" value="ECO:0007669"/>
    <property type="project" value="InterPro"/>
</dbReference>
<dbReference type="GO" id="GO:0075512">
    <property type="term" value="P:clathrin-dependent endocytosis of virus by host cell"/>
    <property type="evidence" value="ECO:0007669"/>
    <property type="project" value="UniProtKB-KW"/>
</dbReference>
<dbReference type="GO" id="GO:0039654">
    <property type="term" value="P:fusion of virus membrane with host endosome membrane"/>
    <property type="evidence" value="ECO:0007669"/>
    <property type="project" value="UniProtKB-KW"/>
</dbReference>
<dbReference type="GO" id="GO:0006508">
    <property type="term" value="P:proteolysis"/>
    <property type="evidence" value="ECO:0007669"/>
    <property type="project" value="UniProtKB-KW"/>
</dbReference>
<dbReference type="GO" id="GO:0039545">
    <property type="term" value="P:symbiont-mediated suppression of host cytoplasmic pattern recognition receptor signaling pathway via inhibition of MAVS activity"/>
    <property type="evidence" value="ECO:0007669"/>
    <property type="project" value="UniProtKB-KW"/>
</dbReference>
<dbReference type="GO" id="GO:0039694">
    <property type="term" value="P:viral RNA genome replication"/>
    <property type="evidence" value="ECO:0007669"/>
    <property type="project" value="InterPro"/>
</dbReference>
<dbReference type="GO" id="GO:0019062">
    <property type="term" value="P:virion attachment to host cell"/>
    <property type="evidence" value="ECO:0007669"/>
    <property type="project" value="UniProtKB-KW"/>
</dbReference>
<dbReference type="CDD" id="cd20761">
    <property type="entry name" value="capping_2-OMTase_Flaviviridae"/>
    <property type="match status" value="1"/>
</dbReference>
<dbReference type="CDD" id="cd17931">
    <property type="entry name" value="DEXHc_viral_Ns3"/>
    <property type="match status" value="1"/>
</dbReference>
<dbReference type="CDD" id="cd12149">
    <property type="entry name" value="Flavi_E_C"/>
    <property type="match status" value="1"/>
</dbReference>
<dbReference type="CDD" id="cd17038">
    <property type="entry name" value="Flavi_M"/>
    <property type="match status" value="1"/>
</dbReference>
<dbReference type="CDD" id="cd23204">
    <property type="entry name" value="Flavivirus_RdRp"/>
    <property type="match status" value="1"/>
</dbReference>
<dbReference type="CDD" id="cd18806">
    <property type="entry name" value="SF2_C_viral"/>
    <property type="match status" value="1"/>
</dbReference>
<dbReference type="FunFam" id="1.20.1280.260:FF:000001">
    <property type="entry name" value="Envelope glycoprotein"/>
    <property type="match status" value="1"/>
</dbReference>
<dbReference type="FunFam" id="2.60.40.350:FF:000001">
    <property type="entry name" value="Envelope glycoprotein"/>
    <property type="match status" value="1"/>
</dbReference>
<dbReference type="FunFam" id="1.10.260.90:FF:000001">
    <property type="entry name" value="Genome polyprotein"/>
    <property type="match status" value="1"/>
</dbReference>
<dbReference type="FunFam" id="3.40.50.150:FF:000105">
    <property type="entry name" value="Genome polyprotein"/>
    <property type="match status" value="1"/>
</dbReference>
<dbReference type="FunFam" id="3.40.50.300:FF:000763">
    <property type="entry name" value="Genome polyprotein"/>
    <property type="match status" value="1"/>
</dbReference>
<dbReference type="Gene3D" id="1.10.10.930">
    <property type="match status" value="1"/>
</dbReference>
<dbReference type="Gene3D" id="1.10.260.90">
    <property type="match status" value="1"/>
</dbReference>
<dbReference type="Gene3D" id="1.20.1280.260">
    <property type="match status" value="1"/>
</dbReference>
<dbReference type="Gene3D" id="2.40.10.120">
    <property type="match status" value="2"/>
</dbReference>
<dbReference type="Gene3D" id="2.60.40.350">
    <property type="match status" value="1"/>
</dbReference>
<dbReference type="Gene3D" id="1.10.8.970">
    <property type="entry name" value="Flavivirus envelope glycoprotein M-like"/>
    <property type="match status" value="1"/>
</dbReference>
<dbReference type="Gene3D" id="2.60.260.50">
    <property type="entry name" value="Flavivirus polyprotein propeptide domain"/>
    <property type="match status" value="1"/>
</dbReference>
<dbReference type="Gene3D" id="3.30.70.2840">
    <property type="entry name" value="Flavivirus RNA-directed RNA polymerase, thumb domain"/>
    <property type="match status" value="2"/>
</dbReference>
<dbReference type="Gene3D" id="3.40.50.300">
    <property type="entry name" value="P-loop containing nucleotide triphosphate hydrolases"/>
    <property type="match status" value="2"/>
</dbReference>
<dbReference type="Gene3D" id="2.60.98.10">
    <property type="entry name" value="Tick-borne Encephalitis virus Glycoprotein, domain 1"/>
    <property type="match status" value="1"/>
</dbReference>
<dbReference type="Gene3D" id="3.40.50.150">
    <property type="entry name" value="Vaccinia Virus protein VP39"/>
    <property type="match status" value="1"/>
</dbReference>
<dbReference type="Gene3D" id="3.30.67.10">
    <property type="entry name" value="Viral Envelope Glycoprotein, domain 2"/>
    <property type="match status" value="1"/>
</dbReference>
<dbReference type="Gene3D" id="3.30.387.10">
    <property type="entry name" value="Viral Envelope Glycoprotein, domain 3"/>
    <property type="match status" value="1"/>
</dbReference>
<dbReference type="InterPro" id="IPR043502">
    <property type="entry name" value="DNA/RNA_pol_sf"/>
</dbReference>
<dbReference type="InterPro" id="IPR000069">
    <property type="entry name" value="Env_glycoprot_M_flavivir"/>
</dbReference>
<dbReference type="InterPro" id="IPR038302">
    <property type="entry name" value="Env_glycoprot_M_sf_flavivir"/>
</dbReference>
<dbReference type="InterPro" id="IPR013755">
    <property type="entry name" value="Flav_gly_cen_dom_subdom1"/>
</dbReference>
<dbReference type="InterPro" id="IPR001122">
    <property type="entry name" value="Flavi_capsidC"/>
</dbReference>
<dbReference type="InterPro" id="IPR037172">
    <property type="entry name" value="Flavi_capsidC_sf"/>
</dbReference>
<dbReference type="InterPro" id="IPR011492">
    <property type="entry name" value="Flavi_DEAD"/>
</dbReference>
<dbReference type="InterPro" id="IPR027287">
    <property type="entry name" value="Flavi_E_Ig-like"/>
</dbReference>
<dbReference type="InterPro" id="IPR026470">
    <property type="entry name" value="Flavi_E_Stem/Anchor_dom"/>
</dbReference>
<dbReference type="InterPro" id="IPR038345">
    <property type="entry name" value="Flavi_E_Stem/Anchor_dom_sf"/>
</dbReference>
<dbReference type="InterPro" id="IPR011998">
    <property type="entry name" value="Flavi_Glycoprot_E_cen/dimer"/>
</dbReference>
<dbReference type="InterPro" id="IPR001157">
    <property type="entry name" value="Flavi_NS1"/>
</dbReference>
<dbReference type="InterPro" id="IPR000752">
    <property type="entry name" value="Flavi_NS2A"/>
</dbReference>
<dbReference type="InterPro" id="IPR000487">
    <property type="entry name" value="Flavi_NS2B"/>
</dbReference>
<dbReference type="InterPro" id="IPR001850">
    <property type="entry name" value="Flavi_NS3_S7"/>
</dbReference>
<dbReference type="InterPro" id="IPR000404">
    <property type="entry name" value="Flavi_NS4A"/>
</dbReference>
<dbReference type="InterPro" id="IPR001528">
    <property type="entry name" value="Flavi_NS4B"/>
</dbReference>
<dbReference type="InterPro" id="IPR046811">
    <property type="entry name" value="Flavi_NS5_thumb"/>
</dbReference>
<dbReference type="InterPro" id="IPR002535">
    <property type="entry name" value="Flavi_propep"/>
</dbReference>
<dbReference type="InterPro" id="IPR038688">
    <property type="entry name" value="Flavi_propep_sf"/>
</dbReference>
<dbReference type="InterPro" id="IPR047530">
    <property type="entry name" value="Flavi_RdRp"/>
</dbReference>
<dbReference type="InterPro" id="IPR000208">
    <property type="entry name" value="Flavi_RdRp_fingers/palm"/>
</dbReference>
<dbReference type="InterPro" id="IPR000336">
    <property type="entry name" value="Flavivir/Alphavir_Ig-like_sf"/>
</dbReference>
<dbReference type="InterPro" id="IPR014412">
    <property type="entry name" value="Gen_Poly_FLV"/>
</dbReference>
<dbReference type="InterPro" id="IPR036253">
    <property type="entry name" value="Glycoprot_cen/dimer_sf"/>
</dbReference>
<dbReference type="InterPro" id="IPR038055">
    <property type="entry name" value="Glycoprot_E_dimer_dom"/>
</dbReference>
<dbReference type="InterPro" id="IPR013756">
    <property type="entry name" value="GlyE_cen_dom_subdom2"/>
</dbReference>
<dbReference type="InterPro" id="IPR014001">
    <property type="entry name" value="Helicase_ATP-bd"/>
</dbReference>
<dbReference type="InterPro" id="IPR001650">
    <property type="entry name" value="Helicase_C-like"/>
</dbReference>
<dbReference type="InterPro" id="IPR014756">
    <property type="entry name" value="Ig_E-set"/>
</dbReference>
<dbReference type="InterPro" id="IPR026490">
    <property type="entry name" value="mRNA_cap_0/1_MeTrfase"/>
</dbReference>
<dbReference type="InterPro" id="IPR049486">
    <property type="entry name" value="NS3-hel_C_flaviviridae"/>
</dbReference>
<dbReference type="InterPro" id="IPR027417">
    <property type="entry name" value="P-loop_NTPase"/>
</dbReference>
<dbReference type="InterPro" id="IPR009003">
    <property type="entry name" value="Peptidase_S1_PA"/>
</dbReference>
<dbReference type="InterPro" id="IPR007094">
    <property type="entry name" value="RNA-dir_pol_PSvirus"/>
</dbReference>
<dbReference type="InterPro" id="IPR002877">
    <property type="entry name" value="RNA_MeTrfase_FtsJ_dom"/>
</dbReference>
<dbReference type="InterPro" id="IPR029063">
    <property type="entry name" value="SAM-dependent_MTases_sf"/>
</dbReference>
<dbReference type="NCBIfam" id="TIGR04240">
    <property type="entry name" value="flavi_E_stem"/>
    <property type="match status" value="1"/>
</dbReference>
<dbReference type="Pfam" id="PF20907">
    <property type="entry name" value="Flav_NS3-hel_C"/>
    <property type="match status" value="1"/>
</dbReference>
<dbReference type="Pfam" id="PF01003">
    <property type="entry name" value="Flavi_capsid"/>
    <property type="match status" value="1"/>
</dbReference>
<dbReference type="Pfam" id="PF07652">
    <property type="entry name" value="Flavi_DEAD"/>
    <property type="match status" value="1"/>
</dbReference>
<dbReference type="Pfam" id="PF21659">
    <property type="entry name" value="Flavi_E_stem"/>
    <property type="match status" value="1"/>
</dbReference>
<dbReference type="Pfam" id="PF02832">
    <property type="entry name" value="Flavi_glycop_C"/>
    <property type="match status" value="1"/>
</dbReference>
<dbReference type="Pfam" id="PF00869">
    <property type="entry name" value="Flavi_glycoprot"/>
    <property type="match status" value="1"/>
</dbReference>
<dbReference type="Pfam" id="PF01004">
    <property type="entry name" value="Flavi_M"/>
    <property type="match status" value="1"/>
</dbReference>
<dbReference type="Pfam" id="PF00948">
    <property type="entry name" value="Flavi_NS1"/>
    <property type="match status" value="1"/>
</dbReference>
<dbReference type="Pfam" id="PF01005">
    <property type="entry name" value="Flavi_NS2A"/>
    <property type="match status" value="1"/>
</dbReference>
<dbReference type="Pfam" id="PF01002">
    <property type="entry name" value="Flavi_NS2B"/>
    <property type="match status" value="1"/>
</dbReference>
<dbReference type="Pfam" id="PF01350">
    <property type="entry name" value="Flavi_NS4A"/>
    <property type="match status" value="1"/>
</dbReference>
<dbReference type="Pfam" id="PF01349">
    <property type="entry name" value="Flavi_NS4B"/>
    <property type="match status" value="1"/>
</dbReference>
<dbReference type="Pfam" id="PF00972">
    <property type="entry name" value="Flavi_NS5"/>
    <property type="match status" value="1"/>
</dbReference>
<dbReference type="Pfam" id="PF20483">
    <property type="entry name" value="Flavi_NS5_thumb"/>
    <property type="match status" value="1"/>
</dbReference>
<dbReference type="Pfam" id="PF01570">
    <property type="entry name" value="Flavi_propep"/>
    <property type="match status" value="1"/>
</dbReference>
<dbReference type="Pfam" id="PF01728">
    <property type="entry name" value="FtsJ"/>
    <property type="match status" value="1"/>
</dbReference>
<dbReference type="Pfam" id="PF00949">
    <property type="entry name" value="Peptidase_S7"/>
    <property type="match status" value="1"/>
</dbReference>
<dbReference type="PIRSF" id="PIRSF003817">
    <property type="entry name" value="Gen_Poly_FLV"/>
    <property type="match status" value="1"/>
</dbReference>
<dbReference type="SMART" id="SM00487">
    <property type="entry name" value="DEXDc"/>
    <property type="match status" value="1"/>
</dbReference>
<dbReference type="SMART" id="SM00490">
    <property type="entry name" value="HELICc"/>
    <property type="match status" value="1"/>
</dbReference>
<dbReference type="SUPFAM" id="SSF56672">
    <property type="entry name" value="DNA/RNA polymerases"/>
    <property type="match status" value="1"/>
</dbReference>
<dbReference type="SUPFAM" id="SSF81296">
    <property type="entry name" value="E set domains"/>
    <property type="match status" value="1"/>
</dbReference>
<dbReference type="SUPFAM" id="SSF101257">
    <property type="entry name" value="Flavivirus capsid protein C"/>
    <property type="match status" value="1"/>
</dbReference>
<dbReference type="SUPFAM" id="SSF52540">
    <property type="entry name" value="P-loop containing nucleoside triphosphate hydrolases"/>
    <property type="match status" value="2"/>
</dbReference>
<dbReference type="SUPFAM" id="SSF53335">
    <property type="entry name" value="S-adenosyl-L-methionine-dependent methyltransferases"/>
    <property type="match status" value="1"/>
</dbReference>
<dbReference type="SUPFAM" id="SSF50494">
    <property type="entry name" value="Trypsin-like serine proteases"/>
    <property type="match status" value="1"/>
</dbReference>
<dbReference type="SUPFAM" id="SSF56983">
    <property type="entry name" value="Viral glycoprotein, central and dimerisation domains"/>
    <property type="match status" value="1"/>
</dbReference>
<dbReference type="PROSITE" id="PS51527">
    <property type="entry name" value="FLAVIVIRUS_NS2B"/>
    <property type="match status" value="1"/>
</dbReference>
<dbReference type="PROSITE" id="PS51528">
    <property type="entry name" value="FLAVIVIRUS_NS3PRO"/>
    <property type="match status" value="1"/>
</dbReference>
<dbReference type="PROSITE" id="PS51192">
    <property type="entry name" value="HELICASE_ATP_BIND_1"/>
    <property type="match status" value="1"/>
</dbReference>
<dbReference type="PROSITE" id="PS51194">
    <property type="entry name" value="HELICASE_CTER"/>
    <property type="match status" value="1"/>
</dbReference>
<dbReference type="PROSITE" id="PS50507">
    <property type="entry name" value="RDRP_SSRNA_POS"/>
    <property type="match status" value="1"/>
</dbReference>
<dbReference type="PROSITE" id="PS51591">
    <property type="entry name" value="RNA_CAP01_NS5_MT"/>
    <property type="match status" value="1"/>
</dbReference>
<protein>
    <recommendedName>
        <fullName>Genome polyprotein</fullName>
    </recommendedName>
    <component>
        <recommendedName>
            <fullName>Capsid protein C</fullName>
        </recommendedName>
        <alternativeName>
            <fullName>Core protein</fullName>
        </alternativeName>
    </component>
    <component>
        <recommendedName>
            <fullName>Protein prM</fullName>
        </recommendedName>
    </component>
    <component>
        <recommendedName>
            <fullName>Peptide pr</fullName>
        </recommendedName>
    </component>
    <component>
        <recommendedName>
            <fullName>Small envelope protein M</fullName>
        </recommendedName>
        <alternativeName>
            <fullName>Matrix protein</fullName>
        </alternativeName>
    </component>
    <component>
        <recommendedName>
            <fullName>Envelope protein E</fullName>
        </recommendedName>
    </component>
    <component>
        <recommendedName>
            <fullName>Non-structural protein 1</fullName>
            <shortName>NS1</shortName>
        </recommendedName>
    </component>
    <component>
        <recommendedName>
            <fullName>Non-structural protein 2A</fullName>
            <shortName>NS2A</shortName>
        </recommendedName>
    </component>
    <component>
        <recommendedName>
            <fullName>Serine protease subunit NS2B</fullName>
        </recommendedName>
        <alternativeName>
            <fullName>Flavivirin protease NS2B regulatory subunit</fullName>
        </alternativeName>
        <alternativeName>
            <fullName>Non-structural protein 2B</fullName>
        </alternativeName>
    </component>
    <component>
        <recommendedName>
            <fullName>Serine protease NS3</fullName>
            <ecNumber>3.4.21.91</ecNumber>
            <ecNumber>3.6.1.15</ecNumber>
            <ecNumber>3.6.4.13</ecNumber>
        </recommendedName>
        <alternativeName>
            <fullName>Flavivirin protease NS3 catalytic subunit</fullName>
        </alternativeName>
        <alternativeName>
            <fullName>Non-structural protein 3</fullName>
        </alternativeName>
    </component>
    <component>
        <recommendedName>
            <fullName>Non-structural protein 4A</fullName>
            <shortName>NS4A</shortName>
        </recommendedName>
    </component>
    <component>
        <recommendedName>
            <fullName>Peptide 2k</fullName>
        </recommendedName>
    </component>
    <component>
        <recommendedName>
            <fullName>Non-structural protein 4B</fullName>
            <shortName>NS4B</shortName>
        </recommendedName>
    </component>
    <component>
        <recommendedName>
            <fullName>RNA-directed RNA polymerase NS5</fullName>
            <ecNumber evidence="16">2.1.1.56</ecNumber>
            <ecNumber evidence="16">2.1.1.57</ecNumber>
            <ecNumber evidence="11">2.7.7.48</ecNumber>
        </recommendedName>
        <alternativeName>
            <fullName>NS5</fullName>
        </alternativeName>
    </component>
</protein>
<keyword id="KW-0067">ATP-binding</keyword>
<keyword id="KW-0167">Capsid protein</keyword>
<keyword id="KW-1165">Clathrin-mediated endocytosis of virus by host</keyword>
<keyword id="KW-0165">Cleavage on pair of basic residues</keyword>
<keyword id="KW-1015">Disulfide bond</keyword>
<keyword id="KW-1170">Fusion of virus membrane with host endosomal membrane</keyword>
<keyword id="KW-1168">Fusion of virus membrane with host membrane</keyword>
<keyword id="KW-0325">Glycoprotein</keyword>
<keyword id="KW-0347">Helicase</keyword>
<keyword id="KW-1035">Host cytoplasm</keyword>
<keyword id="KW-1038">Host endoplasmic reticulum</keyword>
<keyword id="KW-1043">Host membrane</keyword>
<keyword id="KW-1048">Host nucleus</keyword>
<keyword id="KW-0945">Host-virus interaction</keyword>
<keyword id="KW-0378">Hydrolase</keyword>
<keyword id="KW-1090">Inhibition of host innate immune response by virus</keyword>
<keyword id="KW-1097">Inhibition of host MAVS by virus</keyword>
<keyword id="KW-1113">Inhibition of host RLR pathway by virus</keyword>
<keyword id="KW-0472">Membrane</keyword>
<keyword id="KW-0479">Metal-binding</keyword>
<keyword id="KW-0489">Methyltransferase</keyword>
<keyword id="KW-0506">mRNA capping</keyword>
<keyword id="KW-0507">mRNA processing</keyword>
<keyword id="KW-0511">Multifunctional enzyme</keyword>
<keyword id="KW-0547">Nucleotide-binding</keyword>
<keyword id="KW-0548">Nucleotidyltransferase</keyword>
<keyword id="KW-0597">Phosphoprotein</keyword>
<keyword id="KW-0645">Protease</keyword>
<keyword id="KW-0694">RNA-binding</keyword>
<keyword id="KW-0696">RNA-directed RNA polymerase</keyword>
<keyword id="KW-0949">S-adenosyl-L-methionine</keyword>
<keyword id="KW-0964">Secreted</keyword>
<keyword id="KW-0720">Serine protease</keyword>
<keyword id="KW-0804">Transcription</keyword>
<keyword id="KW-0805">Transcription regulation</keyword>
<keyword id="KW-0808">Transferase</keyword>
<keyword id="KW-0812">Transmembrane</keyword>
<keyword id="KW-1133">Transmembrane helix</keyword>
<keyword id="KW-1161">Viral attachment to host cell</keyword>
<keyword id="KW-0261">Viral envelope protein</keyword>
<keyword id="KW-0899">Viral immunoevasion</keyword>
<keyword id="KW-1162">Viral penetration into host cytoplasm</keyword>
<keyword id="KW-0693">Viral RNA replication</keyword>
<keyword id="KW-0946">Virion</keyword>
<keyword id="KW-1164">Virus endocytosis by host</keyword>
<keyword id="KW-1160">Virus entry into host cell</keyword>
<keyword id="KW-0862">Zinc</keyword>
<sequence>MSNKKPGRPGSGRVVNMLKRGTSRGNPLARIKRTIDGVLRGAGPIRFVLALLTFFKFTALRPTIGMLKRWKLVGVNEATKHLKSFKRDIGQMLDGLNKRKAKRRGGSCSWIIMLLPIVAGLKLGNYNGRVLATLNKTDVSDLLVIPITAGSNGCVVRALDVGLMCQDDITYLCPKLEYGYEPEDIDCWCNETEIYIHYGRCTPSRHGRRSRRSVNVHHHGESLLEAKNTPWMDSTKATKYLTKVENWALRNPGYALAAIFIGWNLGTTRSQKIIFTIMLMLIAPAYSFSCLGMQNRDFVEGVNGVEWIDVVLEGGPCVTITAKDRPTIDVKMMNMEATELAVVRSYCYEPRVSDVTTESRCPTMGEAHNPKATYAEYICKKDFVDRGWGNGCGLFGKGSIQTCAKFDCTKKAEGRIVQKENVQFEVAVFIHGSTEASTYHNYSAQQSLKHAARFVITPKSPVYTAEMEDYGTVTLECEPRSGVDMGQFYVFTMNTKSWLVNRDWFHDLNLPWTGSSAGTWQNKESLIEFEEAHATKQSVVALASQEGALHAALAGAIPVKYSGSKLEMTSGHLKCRVKMQGLKLKGMTYPMCSNTFSLVKNPTDTGHGTVVVELSYAGTDGPCRVPISMSADLNDMTPVGRLITVNPYVSTSSTGAKIMVEVEPPFGDSFILVGSGKGQIRYQWHRSGSTIGKAFTSTLKGAQRMVALGDTAWDFGSVGGVLTSIGKGIHQVFGSAFKSLFGGMSWTTQGMLGALLLWMGLNARDRSISMTFLAVGGILVFLAVNVNADTGCSIDLARKELKCGQGMFVFNDVEAWKDNYKYYPSTPRRLAKVVAEAHEAGICGIRSVSRLEHNMWVSIKHELNAILEDNAIDLTVVVEENPGRYGKTNQRLPNVDGELMYGWKKWGKSIFSSPKMSNNTFVIDGPKTKEYPDERRAWNSMKIEDFGFGVLSTKVWMEMRTENTTDCDTAVMGTAIKGNRAVHSDLSYWIESKNNGSWKLERAVLGEVKSCTWPETHTLWSDSVVESELIIPKTLGGPKSHHNTRTGYKVQSSGPWDEKEIVIDFDYCPGTTVTVTSSCRDRGPSARTTTASGKLITDWCCRSCTAPPLRFVTKSGCWYGMEIRPTAHGDDMLIKSKVMAFQGGGMEPMQLGMLVMIVAAQEILRRRMTAPIAWSALLLLMALVLFGGITYSDLVKYVILVAAAFAESNTGGDIVHLAMVAAFNIQPGLLIGFLLRRKWSNQESRLLGVALALITVAMRDLNMSIPTLLNSGAMAWLLLRAVFEGTVSSFALPLVSLLAPGLRIVGIDVVRIGVLTLGILSLLKERSNAMAKKKGGMLLGVACATAGIASPLVFAGLHMVLKPVTRRGWPVSEALTAVGLTFALAGGIAQFDDSSMAIPLAVGGIMLVVAVVTGFSTDLWLEKASDISWSEEARVTGASQRFDVEIDQDGNMRLLNDPGVSLGVWAFRTGLILLSSYNPYFLPLTLAGYWMTTKAKQRGGVIWDVPAPKERKRAEVGNGVFRIMARGLLGKYQAGVGVMHEGVFHTMWHVTNGAVIQAGEGTLVPYWASVRNDLISYGGPWKLGKQWNGVDEVQVIVVQPGKEVINVQTQPGIFKTQYGEVGAVSLDYPTGTSGSPIIDKEGQVVGLYGNGILVGSGDFVSMITQGEKKEEEVPQVFDENMLRKRQLTVLDLHPGSGKTRKVLPMILKSAIDKRLRTAVLAPTRVVAAEIAEALKGLPIRYLTPAVKREHTGTEIIDVMCHATLTARLLTPQRVPNYNLFIMDEAHFTDPASIAARGYISTKVELGEAAAIFMTATPPGTTEAFPDSNSPITDIEEQIPDRAWNSGYEWITDFQGKTVWFVPSVKSGNEIAVCLTKAGKKVIQLNRKSFDSEYPKCKSGEWDFVITTDISEMGANFGAQRVIDSRKCIKPVIIEDGEGSVQMNGPVPITSASAAQRRGRVGRDVTQIGDEYHYSGPTSEDDHDFAHWKEAKILLDNINMPDGLVAQLYGPERDKVDAIDGEFRLRTEQRKHFVEYLRTGDLPVWISYKVAEAGISYNDRRWCFDGPLCNTVLEDNNPVELWTKSGEKKILKPRWRDGRLWADHQALKAFKDFASGKRSAIGILEVFRMLPDHFAHRMTESMDNIYMLTTAEKGSRAHREALEELPETLETFLLVFMMTVASMGVFLFFVQRRGLGKTGLGAMVMATVTVLLWIAEVPAQKIAGVLLVSLLLMIVLIPEPERQRSQTDSHLAVFMIVVLLVVGAVASNEMGWLEQTKKDLSALFGRKSDSHQETWSMPWPDLRPATAWAAYAGATTFLTPLLKHLIITEYVNFSLMAMTAQAGALFGLGKGMPFVKADLSVPLLLLGCWGQFTMTTTVSAVMMVILHYAFLVPGWQAEAMRSAQRRTAAGVMKNPVVDGIVATDVPDLEASTPITEKKLGQCVLVGIALVAVFLTPNTLTLTEFGMLTSAASVTLIEGAAGRIWNATTAVAMCHLLRKNWLAGASLAWTITRNLQAGTLRRGGGTGRTLGEAWKAQLNQLTRQEFMEYRKDGIIEVDRAAAKRARREGNVTGGHPVSRGTAKLRWLVERGFLKPRGKVVDLGCGRGGWSYYCATLKQVQEVRGYTKGGPGHEEPVMTQSYGWNIVTLKSGVNVHFKPTEPSDTLLCDIGEASPVPEIESARTIRVLQMAEEWLARGVEEFCIKVLCPYMPAVIKELERLQLKWGGGLVRVPLSRNSTHEMYWVSGSSGNVTNSINTVSQMLINRMHKTNRNGPRYEEDVDLGSGTRAVSCTRQRTDWGMVADRVKNLAREYAPSWHYDQDNPYKTWNYHGSYEVKATGSASSMVNGVVRILSKPWDTLQNVVNMAMTDTTPFGQQRVFKEKVDTKAPEPPAGTARVMNIVARWMWNFVGRNKQPRMCTKEEFIEKVNSNAALGAMFEEQHKWASAREAVEDPEFWSLVDRERELHLQGKCETCIYNMMGKREKKMGEFGKAKGSRAIWYMWLGARFLEFEALGFLNEDHWMSRENTKGGVEGLGLQKLGYVLRDISAKEGGLMYADDTAGWDTRITKADLENEAIILEKMEPMHRAVAEPLIKFAYMNKVVKVMRPGRDGKTVMDVISREDQRGSGQVVTYALNTFTNLCVQLIRCMEGEELLLPEETERLKKGKEKRIQEWLQKNGENRLSAMAVSGDDCVVKPADDRFATALHFLNSMSKVRKDTQEWKPSTGWRNWQEVPFCSHHFHELQMKDGRKIVVPCRDQDELIGRARLSPGSGWSLTETARLSKAYAQMWLLMYFHRRDLRLMANAICSSVPVSWVPTGRTTWSIHGKGEWMTSEDMLAVWNRVWIEENEHMEDKTPVTSWNEVPYLGKREDGWCGSLIGHRARSTWAENIYTPIMQIRALIGPEHYVDYMPTLNRFKPIESWSEGVL</sequence>
<accession>G1CRV4</accession>
<accession>T1YU46</accession>
<evidence type="ECO:0000250" key="1">
    <source>
        <dbReference type="UniProtKB" id="P03314"/>
    </source>
</evidence>
<evidence type="ECO:0000250" key="2">
    <source>
        <dbReference type="UniProtKB" id="P06935"/>
    </source>
</evidence>
<evidence type="ECO:0000250" key="3">
    <source>
        <dbReference type="UniProtKB" id="P14335"/>
    </source>
</evidence>
<evidence type="ECO:0000250" key="4">
    <source>
        <dbReference type="UniProtKB" id="P14336"/>
    </source>
</evidence>
<evidence type="ECO:0000250" key="5">
    <source>
        <dbReference type="UniProtKB" id="P14340"/>
    </source>
</evidence>
<evidence type="ECO:0000250" key="6">
    <source>
        <dbReference type="UniProtKB" id="P17763"/>
    </source>
</evidence>
<evidence type="ECO:0000250" key="7">
    <source>
        <dbReference type="UniProtKB" id="P29990"/>
    </source>
</evidence>
<evidence type="ECO:0000250" key="8">
    <source>
        <dbReference type="UniProtKB" id="Q6YMS4"/>
    </source>
</evidence>
<evidence type="ECO:0000250" key="9">
    <source>
        <dbReference type="UniProtKB" id="Q9Q6P4"/>
    </source>
</evidence>
<evidence type="ECO:0000255" key="10"/>
<evidence type="ECO:0000255" key="11">
    <source>
        <dbReference type="PROSITE-ProRule" id="PRU00539"/>
    </source>
</evidence>
<evidence type="ECO:0000255" key="12">
    <source>
        <dbReference type="PROSITE-ProRule" id="PRU00541"/>
    </source>
</evidence>
<evidence type="ECO:0000255" key="13">
    <source>
        <dbReference type="PROSITE-ProRule" id="PRU00542"/>
    </source>
</evidence>
<evidence type="ECO:0000255" key="14">
    <source>
        <dbReference type="PROSITE-ProRule" id="PRU00859"/>
    </source>
</evidence>
<evidence type="ECO:0000255" key="15">
    <source>
        <dbReference type="PROSITE-ProRule" id="PRU00860"/>
    </source>
</evidence>
<evidence type="ECO:0000255" key="16">
    <source>
        <dbReference type="PROSITE-ProRule" id="PRU00924"/>
    </source>
</evidence>
<evidence type="ECO:0000269" key="17">
    <source>
    </source>
</evidence>
<evidence type="ECO:0000269" key="18">
    <source>
    </source>
</evidence>
<evidence type="ECO:0000269" key="19">
    <source>
    </source>
</evidence>
<evidence type="ECO:0000303" key="20">
    <source>
    </source>
</evidence>
<evidence type="ECO:0000305" key="21"/>
<evidence type="ECO:0000305" key="22">
    <source>
    </source>
</evidence>
<comment type="function">
    <molecule>Capsid protein C</molecule>
    <text evidence="6 22">Capsid protein self-assembles to form an icosahedral capsid about 40 nm in diameter (Probable). Plays a role in virus budding by binding to the cell membrane and gathering the viral RNA into a nucleocapsid that forms the core of a mature virus particle.</text>
</comment>
<comment type="function">
    <molecule>Peptide pr</molecule>
    <text evidence="6">Prevents premature fusion activity of envelope proteins in trans-Golgi by binding to envelope protein E at pH6.0. After virion release in extracellular space, gets dissociated from E dimers.</text>
</comment>
<comment type="function">
    <molecule>Protein prM</molecule>
    <text evidence="6">Acts as a chaperone for envelope protein E during intracellular virion assembly by masking and inactivating envelope protein E fusion peptide. prM is the only viral peptide matured by host furin in the trans-Golgi network probably to avoid catastrophic activation of the viral fusion activity in acidic Golgi compartment prior to virion release. prM-E cleavage is inefficient, and many virions are only partially matured. These uncleaved prM would play a role in immune evasion.</text>
</comment>
<comment type="function">
    <molecule>Small envelope protein M</molecule>
    <text evidence="6">May play a role in virus budding. Exerts cytotoxic effects by activating a mitochondrial apoptotic pathway through M ectodomain. May display a viroporin activity.</text>
</comment>
<comment type="function">
    <molecule>Envelope protein E</molecule>
    <text evidence="6">Binds to host cell surface receptor and mediates fusion between viral and cellular membranes. Envelope protein is synthesized in the endoplasmic reticulum in the form of heterodimer with protein prM. They play a role in virion budding in the ER, and the newly formed immature particle is covered with 60 spikes composed of heterodimer between precursor prM and envelope protein E. The virion is transported to the Golgi apparatus where the low pH causes dissociation of PrM-E heterodimers and formation of E homodimers.</text>
</comment>
<comment type="function">
    <molecule>Non-structural protein 1</molecule>
    <text evidence="9 18">Involved in immune evasion, pathogenesis and viral replication (PubMed:27821666). Interacts with host MAVS and blocks MAVS binding to RIGI or IFIH1/MDA5, thereby leading to evasion of the innate immune response (PubMed:27821666). Once cleaved off the polyprotein, is targeted to three destinations: the viral replication cycle, the plasma membrane and the extracellular compartment. Essential for viral replication. Required for formation of the replication complex and recruitment of other non-structural proteins to the ER-derived membrane structures. Excreted as a hexameric lipoparticle that plays a role against host immune response.</text>
</comment>
<comment type="function">
    <molecule>Non-structural protein 2A</molecule>
    <text evidence="3">Component of the viral RNA replication complex that functions in virion assembly.</text>
</comment>
<comment type="function">
    <molecule>Serine protease subunit NS2B</molecule>
    <text evidence="6 14">Required cofactor for the serine protease function of NS3 (By similarity). May have membrane-destabilizing activity and form viroporins (By similarity).</text>
</comment>
<comment type="function">
    <molecule>Serine protease NS3</molecule>
    <text evidence="15">Displays three enzymatic activities: serine protease, NTPase and RNA helicase. NS3 serine protease, in association with NS2B, performs its autocleavage and cleaves the polyprotein at dibasic sites in the cytoplasm: C-prM, NS2A-NS2B, NS2B-NS3, NS3-NS4A, NS4A-2K and NS4B-NS5. NS3 RNA helicase binds RNA and unwinds dsRNA in the 3' to 5' direction.</text>
</comment>
<comment type="function">
    <molecule>Non-structural protein 4A</molecule>
    <text evidence="9">Regulates the ATPase activity of the NS3 helicase activity. NS4A allows NS3 helicase to conserve energy during unwinding.</text>
</comment>
<comment type="function">
    <molecule>Peptide 2k</molecule>
    <text evidence="6">Functions as a signal peptide for NS4B.</text>
</comment>
<comment type="function">
    <molecule>Non-structural protein 4B</molecule>
    <text evidence="9">Induces the formation of ER-derived membrane vesicles where the viral replication takes place.</text>
</comment>
<comment type="function">
    <molecule>RNA-directed RNA polymerase NS5</molecule>
    <text evidence="9">Replicates the viral (+) and (-) RNA genome, and performs the capping of genomes in the cytoplasm. NS5 methylates viral RNA cap at guanine N-7 and ribose 2'-O positions.</text>
</comment>
<comment type="catalytic activity">
    <molecule>Serine protease NS3</molecule>
    <reaction>
        <text>Selective hydrolysis of -Xaa-Xaa-|-Yaa- bonds in which each of the Xaa can be either Arg or Lys and Yaa can be either Ser or Ala.</text>
        <dbReference type="EC" id="3.4.21.91"/>
    </reaction>
</comment>
<comment type="catalytic activity">
    <molecule>RNA-directed RNA polymerase NS5</molecule>
    <reaction evidence="11">
        <text>RNA(n) + a ribonucleoside 5'-triphosphate = RNA(n+1) + diphosphate</text>
        <dbReference type="Rhea" id="RHEA:21248"/>
        <dbReference type="Rhea" id="RHEA-COMP:14527"/>
        <dbReference type="Rhea" id="RHEA-COMP:17342"/>
        <dbReference type="ChEBI" id="CHEBI:33019"/>
        <dbReference type="ChEBI" id="CHEBI:61557"/>
        <dbReference type="ChEBI" id="CHEBI:140395"/>
        <dbReference type="EC" id="2.7.7.48"/>
    </reaction>
</comment>
<comment type="catalytic activity">
    <molecule>Serine protease NS3</molecule>
    <reaction>
        <text>a ribonucleoside 5'-triphosphate + H2O = a ribonucleoside 5'-diphosphate + phosphate + H(+)</text>
        <dbReference type="Rhea" id="RHEA:23680"/>
        <dbReference type="ChEBI" id="CHEBI:15377"/>
        <dbReference type="ChEBI" id="CHEBI:15378"/>
        <dbReference type="ChEBI" id="CHEBI:43474"/>
        <dbReference type="ChEBI" id="CHEBI:57930"/>
        <dbReference type="ChEBI" id="CHEBI:61557"/>
        <dbReference type="EC" id="3.6.1.15"/>
    </reaction>
</comment>
<comment type="catalytic activity">
    <molecule>Serine protease NS3</molecule>
    <reaction evidence="9">
        <text>ATP + H2O = ADP + phosphate + H(+)</text>
        <dbReference type="Rhea" id="RHEA:13065"/>
        <dbReference type="ChEBI" id="CHEBI:15377"/>
        <dbReference type="ChEBI" id="CHEBI:15378"/>
        <dbReference type="ChEBI" id="CHEBI:30616"/>
        <dbReference type="ChEBI" id="CHEBI:43474"/>
        <dbReference type="ChEBI" id="CHEBI:456216"/>
        <dbReference type="EC" id="3.6.4.13"/>
    </reaction>
</comment>
<comment type="catalytic activity">
    <molecule>RNA-directed RNA polymerase NS5</molecule>
    <reaction evidence="16">
        <text>a 5'-end (5'-triphosphoguanosine)-ribonucleoside in mRNA + S-adenosyl-L-methionine = a 5'-end (N(7)-methyl 5'-triphosphoguanosine)-ribonucleoside in mRNA + S-adenosyl-L-homocysteine</text>
        <dbReference type="Rhea" id="RHEA:67008"/>
        <dbReference type="Rhea" id="RHEA-COMP:17166"/>
        <dbReference type="Rhea" id="RHEA-COMP:17167"/>
        <dbReference type="ChEBI" id="CHEBI:57856"/>
        <dbReference type="ChEBI" id="CHEBI:59789"/>
        <dbReference type="ChEBI" id="CHEBI:156461"/>
        <dbReference type="ChEBI" id="CHEBI:167617"/>
        <dbReference type="EC" id="2.1.1.56"/>
    </reaction>
</comment>
<comment type="catalytic activity">
    <molecule>RNA-directed RNA polymerase NS5</molecule>
    <reaction evidence="16">
        <text>a 5'-end (N(7)-methyl 5'-triphosphoguanosine)-ribonucleoside in mRNA + S-adenosyl-L-methionine = a 5'-end (N(7)-methyl 5'-triphosphoguanosine)-(2'-O-methyl-ribonucleoside) in mRNA + S-adenosyl-L-homocysteine + H(+)</text>
        <dbReference type="Rhea" id="RHEA:67020"/>
        <dbReference type="Rhea" id="RHEA-COMP:17167"/>
        <dbReference type="Rhea" id="RHEA-COMP:17168"/>
        <dbReference type="ChEBI" id="CHEBI:15378"/>
        <dbReference type="ChEBI" id="CHEBI:57856"/>
        <dbReference type="ChEBI" id="CHEBI:59789"/>
        <dbReference type="ChEBI" id="CHEBI:156461"/>
        <dbReference type="ChEBI" id="CHEBI:167609"/>
        <dbReference type="EC" id="2.1.1.57"/>
    </reaction>
</comment>
<comment type="subunit">
    <molecule>Capsid protein C</molecule>
    <text evidence="6">Homodimer (By similarity).</text>
</comment>
<comment type="subunit">
    <molecule>Protein prM</molecule>
    <text evidence="6">Forms heterodimers with envelope protein E in the endoplasmic reticulum and Golgi.</text>
</comment>
<comment type="subunit">
    <molecule>Envelope protein E</molecule>
    <text evidence="6">Homodimer; in the endoplasmic reticulum and Golgi (By similarity). Interacts with protein prM (By similarity). Interacts with non-structural protein 1 (By similarity).</text>
</comment>
<comment type="subunit">
    <molecule>Non-structural protein 1</molecule>
    <text evidence="9 18">Homodimer; Homohexamer when secreted (By similarity). Interacts with envelope protein E (By similarity). NS1 interacts with NS4B (By similarity). Interacts with host MAVS (via C-terminus); this interaction blocks the interaction of MAVS with RIGI or IFIH1/MDA5 (PubMed:27821666).</text>
</comment>
<comment type="subunit">
    <molecule>Non-structural protein 2A</molecule>
    <text evidence="1">Interacts (via N-terminus) with serine protease NS3.</text>
</comment>
<comment type="subunit">
    <molecule>Serine protease subunit NS2B</molecule>
    <text evidence="6">Forms a heterodimer with serine protease NS3 (By similarity). May form homooligomers (By similarity).</text>
</comment>
<comment type="subunit">
    <molecule>Serine protease NS3</molecule>
    <text evidence="6">Forms a heterodimer with NS2B (By similarity). Interacts with non-structural protein 2A (via N-terminus) (By similarity). Interacts with NS4B (By similarity). Interacts with unphosphorylated RNA-directed RNA polymerase NS5; this interaction stimulates RNA-directed RNA polymerase NS5 guanylyltransferase activity (By similarity).</text>
</comment>
<comment type="subunit">
    <molecule>Non-structural protein 4B</molecule>
    <text evidence="6">Interacts with serine protease NS3 (By similarity).</text>
</comment>
<comment type="subunit">
    <molecule>RNA-directed RNA polymerase NS5</molecule>
    <text evidence="6">Homodimer.</text>
</comment>
<comment type="subcellular location">
    <molecule>Capsid protein C</molecule>
    <subcellularLocation>
        <location evidence="6">Virion</location>
    </subcellularLocation>
    <subcellularLocation>
        <location evidence="6">Host nucleus</location>
    </subcellularLocation>
    <subcellularLocation>
        <location evidence="2">Host cytoplasm</location>
    </subcellularLocation>
    <subcellularLocation>
        <location evidence="2">Host cytoplasm</location>
        <location evidence="2">Host perinuclear region</location>
    </subcellularLocation>
</comment>
<comment type="subcellular location">
    <molecule>Peptide pr</molecule>
    <subcellularLocation>
        <location evidence="6">Secreted</location>
    </subcellularLocation>
</comment>
<comment type="subcellular location">
    <molecule>Small envelope protein M</molecule>
    <subcellularLocation>
        <location evidence="1">Virion membrane</location>
        <topology evidence="1">Multi-pass membrane protein</topology>
    </subcellularLocation>
    <subcellularLocation>
        <location evidence="1">Host endoplasmic reticulum membrane</location>
        <topology evidence="10">Multi-pass membrane protein</topology>
    </subcellularLocation>
    <text evidence="1">ER membrane retention is mediated by the transmembrane domains.</text>
</comment>
<comment type="subcellular location">
    <molecule>Envelope protein E</molecule>
    <subcellularLocation>
        <location evidence="21">Virion membrane</location>
        <topology evidence="1">Multi-pass membrane protein</topology>
    </subcellularLocation>
    <subcellularLocation>
        <location evidence="1">Host endoplasmic reticulum membrane</location>
        <topology evidence="10">Multi-pass membrane protein</topology>
    </subcellularLocation>
    <text evidence="1">ER membrane retention is mediated by the transmembrane domains.</text>
</comment>
<comment type="subcellular location">
    <molecule>Non-structural protein 1</molecule>
    <subcellularLocation>
        <location evidence="6">Secreted</location>
    </subcellularLocation>
    <subcellularLocation>
        <location>Host endoplasmic reticulum membrane</location>
        <topology>Peripheral membrane protein</topology>
        <orientation evidence="6">Lumenal side</orientation>
    </subcellularLocation>
    <text evidence="9">Located in RE-derived vesicles hosting the replication complex.</text>
</comment>
<comment type="subcellular location">
    <molecule>Non-structural protein 2A</molecule>
    <subcellularLocation>
        <location evidence="3">Host endoplasmic reticulum membrane</location>
        <topology evidence="6">Multi-pass membrane protein</topology>
    </subcellularLocation>
</comment>
<comment type="subcellular location">
    <molecule>Serine protease subunit NS2B</molecule>
    <subcellularLocation>
        <location>Host endoplasmic reticulum membrane</location>
        <topology evidence="6">Multi-pass membrane protein</topology>
    </subcellularLocation>
</comment>
<comment type="subcellular location">
    <molecule>Serine protease NS3</molecule>
    <subcellularLocation>
        <location evidence="15">Host endoplasmic reticulum membrane</location>
        <topology evidence="15">Peripheral membrane protein</topology>
        <orientation evidence="15">Cytoplasmic side</orientation>
    </subcellularLocation>
    <text evidence="15">Remains non-covalently associated to serine protease subunit NS2B.</text>
</comment>
<comment type="subcellular location">
    <molecule>Non-structural protein 4A</molecule>
    <subcellularLocation>
        <location evidence="3">Host endoplasmic reticulum membrane</location>
        <topology evidence="6">Multi-pass membrane protein</topology>
    </subcellularLocation>
    <text evidence="6">Located in RE-associated vesicles hosting the replication complex.</text>
</comment>
<comment type="subcellular location">
    <molecule>Non-structural protein 4B</molecule>
    <subcellularLocation>
        <location evidence="6">Host endoplasmic reticulum membrane</location>
        <topology evidence="6">Multi-pass membrane protein</topology>
    </subcellularLocation>
    <text evidence="9">Located in RE-derived vesicles hosting the replication complex.</text>
</comment>
<comment type="subcellular location">
    <molecule>RNA-directed RNA polymerase NS5</molecule>
    <subcellularLocation>
        <location>Host endoplasmic reticulum membrane</location>
        <topology>Peripheral membrane protein</topology>
        <orientation>Cytoplasmic side</orientation>
    </subcellularLocation>
    <subcellularLocation>
        <location evidence="2">Host nucleus</location>
    </subcellularLocation>
    <text evidence="6">Located in RE-associated vesicles hosting the replication complex. NS5 protein is mainly localized in the nucleus rather than in ER vesicles.</text>
</comment>
<comment type="domain">
    <text evidence="6">The transmembrane domains of the small envelope protein M and envelope protein E contain an endoplasmic reticulum retention signal.</text>
</comment>
<comment type="PTM">
    <molecule>Genome polyprotein</molecule>
    <text evidence="6 19">Specific enzymatic cleavages in vivo yield mature proteins (PubMed:32709930). Cleavages in the lumen of endoplasmic reticulum are performed by host signal peptidase, whereas cleavages in the cytoplasmic side are performed by serine protease NS3. Signal cleavage at the 2K-4B site requires a prior NS3 protease-mediated cleavage at the 4A-2K site (By similarity). Both NS2A and NS2B proteins are required in cis for NS2A/2B proteolytic processing (PubMed:32709930).</text>
</comment>
<comment type="PTM">
    <molecule>Protein prM</molecule>
    <text evidence="6">Cleaved in post-Golgi vesicles by a host furin, releasing the mature small envelope protein M, and peptide pr. This cleavage is incomplete as up to 30% of viral particles still carry uncleaved prM.</text>
</comment>
<comment type="PTM">
    <molecule>Envelope protein E</molecule>
    <text evidence="6">N-glycosylated.</text>
</comment>
<comment type="PTM">
    <molecule>Non-structural protein 1</molecule>
    <text evidence="6">N-glycosylated. The excreted form is glycosylated and this is required for efficient secretion of the protein from infected cells.</text>
</comment>
<comment type="PTM">
    <molecule>RNA-directed RNA polymerase NS5</molecule>
    <text evidence="6">Phosphorylated on serines residues. This phosphorylation may trigger NS5 nuclear localization.</text>
</comment>
<comment type="similarity">
    <text evidence="16">In the N-terminal section; belongs to the class I-like SAM-binding methyltransferase superfamily. mRNA cap 0-1 NS5-type methyltransferase family.</text>
</comment>
<organismHost>
    <name type="scientific">Anas</name>
    <name type="common">ducks</name>
    <dbReference type="NCBI Taxonomy" id="8835"/>
</organismHost>
<organismHost>
    <name type="scientific">Anser</name>
    <name type="common">geese</name>
    <dbReference type="NCBI Taxonomy" id="8842"/>
</organismHost>
<organismHost>
    <name type="scientific">Culex tritaeniorhynchus</name>
    <name type="common">Mosquito</name>
    <dbReference type="NCBI Taxonomy" id="7178"/>
</organismHost>
<organismHost>
    <name type="scientific">Gallus</name>
    <dbReference type="NCBI Taxonomy" id="9030"/>
</organismHost>
<organismHost>
    <name type="scientific">Homo sapiens</name>
    <name type="common">Human</name>
    <dbReference type="NCBI Taxonomy" id="9606"/>
</organismHost>
<organismHost>
    <name type="scientific">Melospiza</name>
    <dbReference type="NCBI Taxonomy" id="44395"/>
</organismHost>
<organismHost>
    <name type="scientific">Passer</name>
    <dbReference type="NCBI Taxonomy" id="9159"/>
</organismHost>
<organismHost>
    <name type="scientific">Passerella</name>
    <dbReference type="NCBI Taxonomy" id="44388"/>
</organismHost>
<name>POLG_TMUV</name>
<proteinExistence type="evidence at protein level"/>
<reference key="1">
    <citation type="journal article" date="2013" name="Genome Announc.">
        <title>Complete genome sequence of goose tembusu virus, isolated from jiangnan white geese in jiangsu, china.</title>
        <authorList>
            <person name="Han K."/>
            <person name="Huang X."/>
            <person name="Li Y."/>
            <person name="Zhao D."/>
            <person name="Liu Y."/>
            <person name="Zhou X."/>
            <person name="You Y."/>
            <person name="Xie X."/>
        </authorList>
    </citation>
    <scope>NUCLEOTIDE SEQUENCE [GENOMIC DNA]</scope>
    <source>
        <strain>Isolate Goose/Jiangsu/804/2010</strain>
    </source>
</reference>
<reference key="2">
    <citation type="journal article" date="2013" name="Res. Vet. Sci.">
        <title>Identification and molecular characterization of a novel flavivirus isolated from geese in China.</title>
        <authorList>
            <person name="Huang X."/>
            <person name="Han K."/>
            <person name="Zhao D."/>
            <person name="Liu Y."/>
            <person name="Zhang J."/>
            <person name="Niu H."/>
            <person name="Zhang K."/>
            <person name="Zhu J."/>
            <person name="Wu D."/>
            <person name="Gao L."/>
            <person name="Li Y."/>
        </authorList>
    </citation>
    <scope>NUCLEOTIDE SEQUENCE [GENOMIC DNA]</scope>
    <scope>FUNCTION (CAPSID PROTEIN)</scope>
    <source>
        <strain>Isolate Goose/Jiangsu/804/2010</strain>
    </source>
</reference>
<reference key="3">
    <citation type="journal article" date="2013" name="Virus Genes">
        <title>Molecular characterization of a duck Tembusu virus from China.</title>
        <authorList>
            <person name="Bai X."/>
            <person name="Lv R."/>
            <person name="Liu C."/>
            <person name="Qiu N."/>
            <person name="He Y."/>
            <person name="Yin X."/>
            <person name="Li X."/>
            <person name="Liu M."/>
            <person name="Zhang Y."/>
        </authorList>
    </citation>
    <scope>NUCLEOTIDE SEQUENCE [GENOMIC DNA]</scope>
    <scope>PROTEOLYTIC CLEAVAGE (GENOME POLYPROTEIN)</scope>
    <source>
        <strain>Isolate HN</strain>
    </source>
</reference>
<reference key="4">
    <citation type="journal article" date="2020" name="Sci. Rep.">
        <title>Determinants of duck Tembusu virus NS2A/2B polyprotein procession attenuated viral replication and proliferation in vitro.</title>
        <authorList>
            <person name="Jiang B."/>
            <person name="Zhang W."/>
            <person name="Wu Y."/>
            <person name="Wang T."/>
            <person name="Wang M."/>
            <person name="Jia R."/>
            <person name="Zhu D."/>
            <person name="Liu M."/>
            <person name="Zhao X."/>
            <person name="Yang Q."/>
            <person name="Wu Y."/>
            <person name="Zhang S."/>
            <person name="Liu Y."/>
            <person name="Zhang L."/>
            <person name="Yu Y."/>
            <person name="Pan L."/>
            <person name="Chen S."/>
            <person name="Cheng A."/>
        </authorList>
    </citation>
    <scope>PROTEOLYTIC CLEAVAGE (GENOME POLYPROTEIN)</scope>
</reference>
<reference key="5">
    <citation type="journal article" date="2016" name="J. Immunol.">
        <title>Duck Tembusu Virus Nonstructural Protein 1 Antagonizes IFN-beta Signaling Pathways by Targeting VISA.</title>
        <authorList>
            <person name="Wang J."/>
            <person name="Lei C.Q."/>
            <person name="Ji Y."/>
            <person name="Zhou H."/>
            <person name="Ren Y."/>
            <person name="Peng Q."/>
            <person name="Zeng Y."/>
            <person name="Jia Y."/>
            <person name="Ge J."/>
            <person name="Zhong B."/>
            <person name="Li Y."/>
            <person name="Wei J."/>
            <person name="Shu H.B."/>
            <person name="Zhu Q."/>
        </authorList>
    </citation>
    <scope>FUNCTION (NON-STRUCTURAL PROTEIN 1)</scope>
    <scope>INTERACTION WITH HOST MAVS (NON-STRUCTURAL PROTEIN 1)</scope>
</reference>
<feature type="chain" id="PRO_0000460762" description="Genome polyprotein">
    <location>
        <begin position="1"/>
        <end position="3425"/>
    </location>
</feature>
<feature type="chain" id="PRO_0000460763" description="Capsid protein C">
    <location>
        <begin position="2"/>
        <end position="104"/>
    </location>
</feature>
<feature type="propeptide" id="PRO_0000460764" description="ER anchor for the capsid protein C, removed in mature form by serine protease NS3">
    <location>
        <begin position="105"/>
        <end position="120"/>
    </location>
</feature>
<feature type="chain" id="PRO_0000460765" description="Protein prM">
    <location>
        <begin position="121"/>
        <end position="287"/>
    </location>
</feature>
<feature type="chain" id="PRO_0000460766" description="Peptide pr">
    <location>
        <begin position="121"/>
        <end position="212"/>
    </location>
</feature>
<feature type="chain" id="PRO_0000460767" description="Small envelope protein M">
    <location>
        <begin position="213"/>
        <end position="287"/>
    </location>
</feature>
<feature type="chain" id="PRO_0000460768" description="Envelope protein E">
    <location>
        <begin position="288"/>
        <end position="788"/>
    </location>
</feature>
<feature type="chain" id="PRO_0000460769" description="Non-structural protein 1">
    <location>
        <begin position="789"/>
        <end position="1140"/>
    </location>
</feature>
<feature type="chain" id="PRO_0000460770" description="Non-structural protein 2A">
    <location>
        <begin position="1141"/>
        <end position="1367"/>
    </location>
</feature>
<feature type="chain" id="PRO_0000460771" description="Serine protease subunit NS2B">
    <location>
        <begin position="1368"/>
        <end position="1498"/>
    </location>
</feature>
<feature type="chain" id="PRO_0000460772" description="Serine protease NS3">
    <location>
        <begin position="1499"/>
        <end position="2117"/>
    </location>
</feature>
<feature type="chain" id="PRO_0000460773" description="Non-structural protein 4A">
    <location>
        <begin position="2118"/>
        <end position="2243"/>
    </location>
</feature>
<feature type="peptide" id="PRO_0000460774" description="Peptide 2k">
    <location>
        <begin position="2244"/>
        <end position="2266"/>
    </location>
</feature>
<feature type="chain" id="PRO_0000460775" description="Non-structural protein 4B">
    <location>
        <begin position="2267"/>
        <end position="2520"/>
    </location>
</feature>
<feature type="chain" id="PRO_0000460776" description="RNA-directed RNA polymerase NS5">
    <location>
        <begin position="2521"/>
        <end position="3425"/>
    </location>
</feature>
<feature type="transmembrane region" description="Helical" evidence="10">
    <location>
        <begin position="105"/>
        <end position="125"/>
    </location>
</feature>
<feature type="transmembrane region" description="Helical" evidence="10">
    <location>
        <begin position="247"/>
        <end position="267"/>
    </location>
</feature>
<feature type="transmembrane region" description="Helical" evidence="10">
    <location>
        <begin position="273"/>
        <end position="293"/>
    </location>
</feature>
<feature type="transmembrane region" description="Helical" evidence="10">
    <location>
        <begin position="740"/>
        <end position="760"/>
    </location>
</feature>
<feature type="transmembrane region" description="Helical" evidence="10">
    <location>
        <begin position="768"/>
        <end position="788"/>
    </location>
</feature>
<feature type="transmembrane region" description="Helical" evidence="10">
    <location>
        <begin position="1138"/>
        <end position="1158"/>
    </location>
</feature>
<feature type="transmembrane region" description="Helical" evidence="10">
    <location>
        <begin position="1169"/>
        <end position="1189"/>
    </location>
</feature>
<feature type="transmembrane region" description="Helical" evidence="10">
    <location>
        <begin position="1214"/>
        <end position="1234"/>
    </location>
</feature>
<feature type="transmembrane region" description="Helical" evidence="10">
    <location>
        <begin position="1290"/>
        <end position="1310"/>
    </location>
</feature>
<feature type="transmembrane region" description="Helical" evidence="10">
    <location>
        <begin position="1337"/>
        <end position="1357"/>
    </location>
</feature>
<feature type="transmembrane region" description="Helical" evidence="10">
    <location>
        <begin position="1369"/>
        <end position="1389"/>
    </location>
</feature>
<feature type="transmembrane region" description="Helical" evidence="10">
    <location>
        <begin position="1395"/>
        <end position="1415"/>
    </location>
</feature>
<feature type="transmembrane region" description="Helical" evidence="10">
    <location>
        <begin position="2169"/>
        <end position="2189"/>
    </location>
</feature>
<feature type="transmembrane region" description="Helical" evidence="10">
    <location>
        <begin position="2194"/>
        <end position="2214"/>
    </location>
</feature>
<feature type="transmembrane region" description="Helical" evidence="10">
    <location>
        <begin position="2216"/>
        <end position="2236"/>
    </location>
</feature>
<feature type="transmembrane region" description="Helical" evidence="10">
    <location>
        <begin position="2252"/>
        <end position="2272"/>
    </location>
</feature>
<feature type="transmembrane region" description="Helical" evidence="10">
    <location>
        <begin position="2306"/>
        <end position="2326"/>
    </location>
</feature>
<feature type="transmembrane region" description="Helical" evidence="10">
    <location>
        <begin position="2334"/>
        <end position="2354"/>
    </location>
</feature>
<feature type="transmembrane region" description="Helical" evidence="10">
    <location>
        <begin position="2371"/>
        <end position="2391"/>
    </location>
</feature>
<feature type="transmembrane region" description="Helical" evidence="10">
    <location>
        <begin position="2441"/>
        <end position="2461"/>
    </location>
</feature>
<feature type="domain" description="Peptidase S7" evidence="15">
    <location>
        <begin position="1499"/>
        <end position="1676"/>
    </location>
</feature>
<feature type="domain" description="Helicase ATP-binding" evidence="12">
    <location>
        <begin position="1679"/>
        <end position="1835"/>
    </location>
</feature>
<feature type="domain" description="Helicase C-terminal" evidence="13">
    <location>
        <begin position="1845"/>
        <end position="2011"/>
    </location>
</feature>
<feature type="domain" description="mRNA cap 0-1 NS5-type MT" evidence="16">
    <location>
        <begin position="2521"/>
        <end position="2786"/>
    </location>
</feature>
<feature type="domain" description="RdRp catalytic" evidence="11">
    <location>
        <begin position="3050"/>
        <end position="3202"/>
    </location>
</feature>
<feature type="region of interest" description="Interaction with host EXOC1" evidence="2">
    <location>
        <begin position="3"/>
        <end position="16"/>
    </location>
</feature>
<feature type="region of interest" description="Hydrophobic; homodimerization of capsid protein C" evidence="7">
    <location>
        <begin position="38"/>
        <end position="73"/>
    </location>
</feature>
<feature type="region of interest" description="Fusion peptide" evidence="4">
    <location>
        <begin position="385"/>
        <end position="398"/>
    </location>
</feature>
<feature type="region of interest" description="Interacts with and activates NS3 protease" evidence="14">
    <location>
        <begin position="1421"/>
        <end position="1460"/>
    </location>
</feature>
<feature type="region of interest" description="Important for RNA-binding" evidence="5">
    <location>
        <begin position="1683"/>
        <end position="1686"/>
    </location>
</feature>
<feature type="region of interest" description="Regulates the ATPase activity of NS3 helicase" evidence="9">
    <location>
        <begin position="2162"/>
        <end position="2166"/>
    </location>
</feature>
<feature type="short sequence motif" description="DEAH box" evidence="12">
    <location>
        <begin position="1783"/>
        <end position="1786"/>
    </location>
</feature>
<feature type="short sequence motif" description="PDZ-binding" evidence="2">
    <location>
        <begin position="3423"/>
        <end position="3425"/>
    </location>
</feature>
<feature type="active site" description="Charge relay system; for serine protease NS3 activity" evidence="15">
    <location>
        <position position="1549"/>
    </location>
</feature>
<feature type="active site" description="Charge relay system; for serine protease NS3 activity" evidence="15">
    <location>
        <position position="1573"/>
    </location>
</feature>
<feature type="active site" description="Charge relay system; for serine protease NS3 activity" evidence="15">
    <location>
        <position position="1633"/>
    </location>
</feature>
<feature type="active site" description="For 2'-O-MTase activity" evidence="8">
    <location>
        <position position="2581"/>
    </location>
</feature>
<feature type="active site" description="For 2'-O-MTase activity" evidence="8">
    <location>
        <position position="2666"/>
    </location>
</feature>
<feature type="active site" description="For 2'-O-MTase activity" evidence="8">
    <location>
        <position position="2702"/>
    </location>
</feature>
<feature type="active site" description="For 2'-O-MTase activity" evidence="8">
    <location>
        <position position="2738"/>
    </location>
</feature>
<feature type="binding site" evidence="12">
    <location>
        <begin position="1692"/>
        <end position="1699"/>
    </location>
    <ligand>
        <name>ATP</name>
        <dbReference type="ChEBI" id="CHEBI:30616"/>
    </ligand>
</feature>
<feature type="binding site" evidence="16">
    <location>
        <position position="2576"/>
    </location>
    <ligand>
        <name>S-adenosyl-L-methionine</name>
        <dbReference type="ChEBI" id="CHEBI:59789"/>
    </ligand>
</feature>
<feature type="binding site" evidence="16">
    <location>
        <position position="2606"/>
    </location>
    <ligand>
        <name>S-adenosyl-L-methionine</name>
        <dbReference type="ChEBI" id="CHEBI:59789"/>
    </ligand>
</feature>
<feature type="binding site" evidence="16">
    <location>
        <position position="2607"/>
    </location>
    <ligand>
        <name>S-adenosyl-L-methionine</name>
        <dbReference type="ChEBI" id="CHEBI:59789"/>
    </ligand>
</feature>
<feature type="binding site" evidence="16">
    <location>
        <position position="2624"/>
    </location>
    <ligand>
        <name>S-adenosyl-L-methionine</name>
        <dbReference type="ChEBI" id="CHEBI:59789"/>
    </ligand>
</feature>
<feature type="binding site" evidence="16">
    <location>
        <position position="2625"/>
    </location>
    <ligand>
        <name>S-adenosyl-L-methionine</name>
        <dbReference type="ChEBI" id="CHEBI:59789"/>
    </ligand>
</feature>
<feature type="binding site" evidence="16">
    <location>
        <position position="2652"/>
    </location>
    <ligand>
        <name>S-adenosyl-L-methionine</name>
        <dbReference type="ChEBI" id="CHEBI:59789"/>
    </ligand>
</feature>
<feature type="binding site" evidence="16">
    <location>
        <position position="2667"/>
    </location>
    <ligand>
        <name>S-adenosyl-L-methionine</name>
        <dbReference type="ChEBI" id="CHEBI:59789"/>
    </ligand>
</feature>
<feature type="binding site" evidence="16">
    <location>
        <position position="2740"/>
    </location>
    <ligand>
        <name>S-adenosyl-L-methionine</name>
        <dbReference type="ChEBI" id="CHEBI:59789"/>
    </ligand>
</feature>
<feature type="binding site" evidence="3">
    <location>
        <position position="2960"/>
    </location>
    <ligand>
        <name>Zn(2+)</name>
        <dbReference type="ChEBI" id="CHEBI:29105"/>
        <label>1</label>
    </ligand>
</feature>
<feature type="binding site" evidence="3">
    <location>
        <position position="2964"/>
    </location>
    <ligand>
        <name>Zn(2+)</name>
        <dbReference type="ChEBI" id="CHEBI:29105"/>
        <label>1</label>
    </ligand>
</feature>
<feature type="binding site" evidence="3">
    <location>
        <position position="2969"/>
    </location>
    <ligand>
        <name>Zn(2+)</name>
        <dbReference type="ChEBI" id="CHEBI:29105"/>
        <label>1</label>
    </ligand>
</feature>
<feature type="binding site" evidence="3">
    <location>
        <position position="2972"/>
    </location>
    <ligand>
        <name>Zn(2+)</name>
        <dbReference type="ChEBI" id="CHEBI:29105"/>
        <label>1</label>
    </ligand>
</feature>
<feature type="binding site" evidence="3">
    <location>
        <position position="3237"/>
    </location>
    <ligand>
        <name>Zn(2+)</name>
        <dbReference type="ChEBI" id="CHEBI:29105"/>
        <label>2</label>
    </ligand>
</feature>
<feature type="binding site" evidence="3">
    <location>
        <position position="3253"/>
    </location>
    <ligand>
        <name>Zn(2+)</name>
        <dbReference type="ChEBI" id="CHEBI:29105"/>
        <label>2</label>
    </ligand>
</feature>
<feature type="binding site" evidence="3">
    <location>
        <position position="3372"/>
    </location>
    <ligand>
        <name>Zn(2+)</name>
        <dbReference type="ChEBI" id="CHEBI:29105"/>
        <label>2</label>
    </ligand>
</feature>
<feature type="site" description="Cleavage; by viral protease NS3" evidence="20">
    <location>
        <begin position="104"/>
        <end position="105"/>
    </location>
</feature>
<feature type="site" description="Cleavage; by host signal peptidase" evidence="20">
    <location>
        <begin position="120"/>
        <end position="121"/>
    </location>
</feature>
<feature type="site" description="Cleavage; by host furin" evidence="20">
    <location>
        <begin position="212"/>
        <end position="213"/>
    </location>
</feature>
<feature type="site" description="Cleavage; by host signal peptidase" evidence="20">
    <location>
        <begin position="287"/>
        <end position="288"/>
    </location>
</feature>
<feature type="site" description="Cleavage; by host signal peptidase" evidence="20">
    <location>
        <begin position="788"/>
        <end position="789"/>
    </location>
</feature>
<feature type="site" description="Cleavage; by host" evidence="20">
    <location>
        <begin position="1140"/>
        <end position="1141"/>
    </location>
</feature>
<feature type="site" description="Cleavage; by viral protease NS3" evidence="19">
    <location>
        <begin position="1367"/>
        <end position="1368"/>
    </location>
</feature>
<feature type="site" description="Cleavage; by autolysis" evidence="20">
    <location>
        <begin position="1498"/>
        <end position="1499"/>
    </location>
</feature>
<feature type="site" description="Involved in NS3 ATPase and RTPase activities" evidence="3">
    <location>
        <position position="1956"/>
    </location>
</feature>
<feature type="site" description="Involved in NS3 ATPase and RTPase activities" evidence="3">
    <location>
        <position position="1959"/>
    </location>
</feature>
<feature type="site" description="Cleavage; by autolysis" evidence="20">
    <location>
        <begin position="2117"/>
        <end position="2118"/>
    </location>
</feature>
<feature type="site" description="Cleavage; by viral protease NS3" evidence="20">
    <location>
        <begin position="2243"/>
        <end position="2244"/>
    </location>
</feature>
<feature type="site" description="Cleavage; by host signal peptidase" evidence="20">
    <location>
        <begin position="2266"/>
        <end position="2267"/>
    </location>
</feature>
<feature type="site" description="Cleavage; by viral protease NS3" evidence="20">
    <location>
        <begin position="2520"/>
        <end position="2521"/>
    </location>
</feature>
<feature type="site" description="mRNA cap binding" evidence="16">
    <location>
        <position position="2533"/>
    </location>
</feature>
<feature type="site" description="mRNA cap binding; via carbonyl oxygen" evidence="16">
    <location>
        <position position="2536"/>
    </location>
</feature>
<feature type="site" description="mRNA cap binding" evidence="16">
    <location>
        <position position="2537"/>
    </location>
</feature>
<feature type="site" description="mRNA cap binding; via carbonyl oxygen" evidence="16">
    <location>
        <position position="2539"/>
    </location>
</feature>
<feature type="site" description="mRNA cap binding" evidence="16">
    <location>
        <position position="2544"/>
    </location>
</feature>
<feature type="site" description="mRNA cap binding" evidence="16">
    <location>
        <position position="2548"/>
    </location>
</feature>
<feature type="site" description="Essential for 2'-O-methyltransferase activity" evidence="16">
    <location>
        <position position="2581"/>
    </location>
</feature>
<feature type="site" description="Essential for 2'-O-methyltransferase and N-7 methyltransferase activity" evidence="16">
    <location>
        <position position="2666"/>
    </location>
</feature>
<feature type="site" description="Essential for 2'-O-methyltransferase activity" evidence="16">
    <location>
        <position position="2702"/>
    </location>
</feature>
<feature type="site" description="mRNA cap binding" evidence="16">
    <location>
        <position position="2733"/>
    </location>
</feature>
<feature type="site" description="mRNA cap binding" evidence="16">
    <location>
        <position position="2735"/>
    </location>
</feature>
<feature type="site" description="Essential for 2'-O-methyltransferase activity" evidence="16">
    <location>
        <position position="2738"/>
    </location>
</feature>
<feature type="modified residue" description="Phosphoserine" evidence="1">
    <location>
        <position position="2576"/>
    </location>
</feature>
<feature type="glycosylation site" description="N-linked (GlcNAc...) asparagine; by host" evidence="3">
    <location>
        <position position="135"/>
    </location>
</feature>
<feature type="glycosylation site" description="N-linked (GlcNAc...) asparagine; by host" evidence="9">
    <location>
        <position position="918"/>
    </location>
</feature>
<feature type="glycosylation site" description="N-linked (GlcNAc...) asparagine; by host" evidence="9">
    <location>
        <position position="963"/>
    </location>
</feature>
<feature type="glycosylation site" description="N-linked (GlcNAc...) asparagine; by host" evidence="9">
    <location>
        <position position="995"/>
    </location>
</feature>
<feature type="disulfide bond" evidence="2">
    <location>
        <begin position="290"/>
        <end position="317"/>
    </location>
</feature>
<feature type="disulfide bond" evidence="2">
    <location>
        <begin position="347"/>
        <end position="403"/>
    </location>
</feature>
<feature type="disulfide bond" evidence="2">
    <location>
        <begin position="361"/>
        <end position="392"/>
    </location>
</feature>
<feature type="disulfide bond" evidence="2">
    <location>
        <begin position="379"/>
        <end position="408"/>
    </location>
</feature>
<feature type="disulfide bond" evidence="2">
    <location>
        <begin position="477"/>
        <end position="575"/>
    </location>
</feature>
<feature type="disulfide bond" evidence="2">
    <location>
        <begin position="592"/>
        <end position="623"/>
    </location>
</feature>
<feature type="disulfide bond" evidence="9">
    <location>
        <begin position="792"/>
        <end position="803"/>
    </location>
</feature>
<feature type="disulfide bond" evidence="9">
    <location>
        <begin position="967"/>
        <end position="1011"/>
    </location>
</feature>
<feature type="disulfide bond" evidence="9">
    <location>
        <begin position="1068"/>
        <end position="1117"/>
    </location>
</feature>
<feature type="disulfide bond" evidence="9">
    <location>
        <begin position="1079"/>
        <end position="1100"/>
    </location>
</feature>
<feature type="disulfide bond" evidence="9">
    <location>
        <begin position="1101"/>
        <end position="1104"/>
    </location>
</feature>
<feature type="sequence variant" description="In strain: Isolate HN." evidence="17">
    <original>I</original>
    <variation>T</variation>
    <location>
        <position position="147"/>
    </location>
</feature>
<feature type="sequence variant" description="In strain: Isolate HN." evidence="17">
    <original>P</original>
    <variation>S</variation>
    <location>
        <position position="316"/>
    </location>
</feature>
<feature type="sequence variant" description="In strain: Isolate HN." evidence="17">
    <original>R</original>
    <variation>K</variation>
    <location>
        <position position="351"/>
    </location>
</feature>
<feature type="sequence variant" description="In strain: Isolate HN." evidence="17">
    <original>L</original>
    <variation>P</variation>
    <location>
        <position position="584"/>
    </location>
</feature>
<feature type="sequence variant" description="In strain: Isolate HN." evidence="17">
    <original>T</original>
    <variation>I</variation>
    <location>
        <position position="747"/>
    </location>
</feature>
<feature type="sequence variant" description="In strain: Isolate HN." evidence="17">
    <original>G</original>
    <variation>R</variation>
    <location>
        <position position="886"/>
    </location>
</feature>
<feature type="sequence variant" description="In strain: Isolate HN." evidence="17">
    <original>Y</original>
    <variation>C</variation>
    <location>
        <position position="931"/>
    </location>
</feature>
<feature type="sequence variant" description="In strain: Isolate HN." evidence="17">
    <original>A</original>
    <variation>T</variation>
    <location>
        <position position="1106"/>
    </location>
</feature>
<feature type="sequence variant" description="In strain: Isolate HN." evidence="17">
    <original>V</original>
    <variation>I</variation>
    <location>
        <position position="1198"/>
    </location>
</feature>
<feature type="sequence variant" description="In strain: Isolate HN." evidence="17">
    <original>L</original>
    <variation>P</variation>
    <location>
        <position position="1279"/>
    </location>
</feature>
<feature type="sequence variant" description="In strain: Isolate HN." evidence="17">
    <original>I</original>
    <variation>V</variation>
    <location>
        <position position="1663"/>
    </location>
</feature>
<feature type="sequence variant" description="In strain: Isolate HN." evidence="17">
    <original>L</original>
    <variation>F</variation>
    <location>
        <position position="1737"/>
    </location>
</feature>
<feature type="sequence variant" description="In strain: Isolate HN." evidence="17">
    <original>I</original>
    <variation>V</variation>
    <location>
        <position position="1870"/>
    </location>
</feature>
<feature type="sequence variant" description="In strain: Isolate HN." evidence="17">
    <original>N</original>
    <variation>D</variation>
    <location>
        <position position="1885"/>
    </location>
</feature>
<feature type="sequence variant" description="In strain: Isolate HN." evidence="17">
    <original>L</original>
    <variation>S</variation>
    <location>
        <position position="2067"/>
    </location>
</feature>
<feature type="sequence variant" description="In strain: Isolate HN." evidence="17">
    <original>V</original>
    <variation>G</variation>
    <location>
        <position position="2684"/>
    </location>
</feature>
<feature type="sequence variant" description="In strain: Isolate HN." evidence="17">
    <original>N</original>
    <variation>S</variation>
    <location>
        <position position="3227"/>
    </location>
</feature>
<feature type="sequence variant" description="In strain: Isolate HN." evidence="17">
    <original>R</original>
    <variation>C</variation>
    <location>
        <position position="3278"/>
    </location>
</feature>
<organism>
    <name type="scientific">Tembusu virus</name>
    <name type="common">TMUV</name>
    <dbReference type="NCBI Taxonomy" id="64293"/>
    <lineage>
        <taxon>Viruses</taxon>
        <taxon>Riboviria</taxon>
        <taxon>Orthornavirae</taxon>
        <taxon>Kitrinoviricota</taxon>
        <taxon>Flasuviricetes</taxon>
        <taxon>Amarillovirales</taxon>
        <taxon>Flaviviridae</taxon>
        <taxon>Orthoflavivirus</taxon>
        <taxon>Orthoflavivirus tembusu</taxon>
    </lineage>
</organism>